<sequence length="233" mass="26331">MKLFDYAPLSLAWREFLQSEFKKPYFLEIEKRYLEALKSPKTIFPKSSNLFCAFNLTPPYAVKIILLGQDPYHSTYLENEQELPVAMGLSFSVEKNAPIPPSLKNIFKELHANLGVPVPCCGDLSAWAKRGMLLLNAILSVEKNQAASHKYIGWEAFSDQILIRLFETTTPLIVVLLGKVAQKKIALIPKNKHIIITAPHPSPLSRGFLGSGVFTSVQKAYREVYRKDFDFSL</sequence>
<feature type="chain" id="PRO_0000176103" description="Uracil-DNA glycosylase">
    <location>
        <begin position="1"/>
        <end position="233"/>
    </location>
</feature>
<feature type="active site" description="Proton acceptor" evidence="1">
    <location>
        <position position="70"/>
    </location>
</feature>
<reference key="1">
    <citation type="journal article" date="1999" name="Nature">
        <title>Genomic sequence comparison of two unrelated isolates of the human gastric pathogen Helicobacter pylori.</title>
        <authorList>
            <person name="Alm R.A."/>
            <person name="Ling L.-S.L."/>
            <person name="Moir D.T."/>
            <person name="King B.L."/>
            <person name="Brown E.D."/>
            <person name="Doig P.C."/>
            <person name="Smith D.R."/>
            <person name="Noonan B."/>
            <person name="Guild B.C."/>
            <person name="deJonge B.L."/>
            <person name="Carmel G."/>
            <person name="Tummino P.J."/>
            <person name="Caruso A."/>
            <person name="Uria-Nickelsen M."/>
            <person name="Mills D.M."/>
            <person name="Ives C."/>
            <person name="Gibson R."/>
            <person name="Merberg D."/>
            <person name="Mills S.D."/>
            <person name="Jiang Q."/>
            <person name="Taylor D.E."/>
            <person name="Vovis G.F."/>
            <person name="Trust T.J."/>
        </authorList>
    </citation>
    <scope>NUCLEOTIDE SEQUENCE [LARGE SCALE GENOMIC DNA]</scope>
    <source>
        <strain>J99 / ATCC 700824</strain>
    </source>
</reference>
<gene>
    <name type="primary">ung</name>
    <name type="ordered locus">jhp_1266</name>
</gene>
<accession>Q9ZJN9</accession>
<protein>
    <recommendedName>
        <fullName>Uracil-DNA glycosylase</fullName>
        <shortName>UDG</shortName>
        <ecNumber>3.2.2.27</ecNumber>
    </recommendedName>
</protein>
<organism>
    <name type="scientific">Helicobacter pylori (strain J99 / ATCC 700824)</name>
    <name type="common">Campylobacter pylori J99</name>
    <dbReference type="NCBI Taxonomy" id="85963"/>
    <lineage>
        <taxon>Bacteria</taxon>
        <taxon>Pseudomonadati</taxon>
        <taxon>Campylobacterota</taxon>
        <taxon>Epsilonproteobacteria</taxon>
        <taxon>Campylobacterales</taxon>
        <taxon>Helicobacteraceae</taxon>
        <taxon>Helicobacter</taxon>
    </lineage>
</organism>
<comment type="function">
    <text evidence="1">Excises uracil residues from the DNA which can arise as a result of misincorporation of dUMP residues by DNA polymerase or due to deamination of cytosine.</text>
</comment>
<comment type="catalytic activity">
    <reaction>
        <text>Hydrolyzes single-stranded DNA or mismatched double-stranded DNA and polynucleotides, releasing free uracil.</text>
        <dbReference type="EC" id="3.2.2.27"/>
    </reaction>
</comment>
<comment type="subcellular location">
    <subcellularLocation>
        <location evidence="1">Cytoplasm</location>
    </subcellularLocation>
</comment>
<comment type="similarity">
    <text evidence="2">Belongs to the uracil-DNA glycosylase (UDG) superfamily. UNG family.</text>
</comment>
<proteinExistence type="inferred from homology"/>
<keyword id="KW-0963">Cytoplasm</keyword>
<keyword id="KW-0227">DNA damage</keyword>
<keyword id="KW-0234">DNA repair</keyword>
<keyword id="KW-0378">Hydrolase</keyword>
<dbReference type="EC" id="3.2.2.27"/>
<dbReference type="EMBL" id="AE001439">
    <property type="protein sequence ID" value="AAD06857.1"/>
    <property type="molecule type" value="Genomic_DNA"/>
</dbReference>
<dbReference type="PIR" id="A71827">
    <property type="entry name" value="A71827"/>
</dbReference>
<dbReference type="RefSeq" id="WP_000764840.1">
    <property type="nucleotide sequence ID" value="NC_000921.1"/>
</dbReference>
<dbReference type="SMR" id="Q9ZJN9"/>
<dbReference type="KEGG" id="hpj:jhp_1266"/>
<dbReference type="PATRIC" id="fig|85963.30.peg.1305"/>
<dbReference type="eggNOG" id="COG0692">
    <property type="taxonomic scope" value="Bacteria"/>
</dbReference>
<dbReference type="Proteomes" id="UP000000804">
    <property type="component" value="Chromosome"/>
</dbReference>
<dbReference type="GO" id="GO:0005737">
    <property type="term" value="C:cytoplasm"/>
    <property type="evidence" value="ECO:0007669"/>
    <property type="project" value="UniProtKB-SubCell"/>
</dbReference>
<dbReference type="GO" id="GO:0004844">
    <property type="term" value="F:uracil DNA N-glycosylase activity"/>
    <property type="evidence" value="ECO:0007669"/>
    <property type="project" value="UniProtKB-UniRule"/>
</dbReference>
<dbReference type="GO" id="GO:0097510">
    <property type="term" value="P:base-excision repair, AP site formation via deaminated base removal"/>
    <property type="evidence" value="ECO:0007669"/>
    <property type="project" value="TreeGrafter"/>
</dbReference>
<dbReference type="CDD" id="cd10027">
    <property type="entry name" value="UDG-F1-like"/>
    <property type="match status" value="1"/>
</dbReference>
<dbReference type="Gene3D" id="3.40.470.10">
    <property type="entry name" value="Uracil-DNA glycosylase-like domain"/>
    <property type="match status" value="1"/>
</dbReference>
<dbReference type="HAMAP" id="MF_00148">
    <property type="entry name" value="UDG"/>
    <property type="match status" value="1"/>
</dbReference>
<dbReference type="InterPro" id="IPR002043">
    <property type="entry name" value="UDG_fam1"/>
</dbReference>
<dbReference type="InterPro" id="IPR018085">
    <property type="entry name" value="Ura-DNA_Glyclase_AS"/>
</dbReference>
<dbReference type="InterPro" id="IPR005122">
    <property type="entry name" value="Uracil-DNA_glycosylase-like"/>
</dbReference>
<dbReference type="InterPro" id="IPR036895">
    <property type="entry name" value="Uracil-DNA_glycosylase-like_sf"/>
</dbReference>
<dbReference type="NCBIfam" id="NF003588">
    <property type="entry name" value="PRK05254.1-1"/>
    <property type="match status" value="1"/>
</dbReference>
<dbReference type="NCBIfam" id="NF003589">
    <property type="entry name" value="PRK05254.1-2"/>
    <property type="match status" value="1"/>
</dbReference>
<dbReference type="NCBIfam" id="NF003592">
    <property type="entry name" value="PRK05254.1-5"/>
    <property type="match status" value="1"/>
</dbReference>
<dbReference type="NCBIfam" id="TIGR00628">
    <property type="entry name" value="ung"/>
    <property type="match status" value="1"/>
</dbReference>
<dbReference type="PANTHER" id="PTHR11264">
    <property type="entry name" value="URACIL-DNA GLYCOSYLASE"/>
    <property type="match status" value="1"/>
</dbReference>
<dbReference type="PANTHER" id="PTHR11264:SF0">
    <property type="entry name" value="URACIL-DNA GLYCOSYLASE"/>
    <property type="match status" value="1"/>
</dbReference>
<dbReference type="Pfam" id="PF03167">
    <property type="entry name" value="UDG"/>
    <property type="match status" value="1"/>
</dbReference>
<dbReference type="SMART" id="SM00986">
    <property type="entry name" value="UDG"/>
    <property type="match status" value="1"/>
</dbReference>
<dbReference type="SMART" id="SM00987">
    <property type="entry name" value="UreE_C"/>
    <property type="match status" value="1"/>
</dbReference>
<dbReference type="SUPFAM" id="SSF52141">
    <property type="entry name" value="Uracil-DNA glycosylase-like"/>
    <property type="match status" value="1"/>
</dbReference>
<dbReference type="PROSITE" id="PS00130">
    <property type="entry name" value="U_DNA_GLYCOSYLASE"/>
    <property type="match status" value="1"/>
</dbReference>
<name>UNG_HELPJ</name>
<evidence type="ECO:0000250" key="1"/>
<evidence type="ECO:0000305" key="2"/>